<organism>
    <name type="scientific">Brucella melitensis biotype 1 (strain ATCC 23456 / CCUG 17765 / NCTC 10094 / 16M)</name>
    <dbReference type="NCBI Taxonomy" id="224914"/>
    <lineage>
        <taxon>Bacteria</taxon>
        <taxon>Pseudomonadati</taxon>
        <taxon>Pseudomonadota</taxon>
        <taxon>Alphaproteobacteria</taxon>
        <taxon>Hyphomicrobiales</taxon>
        <taxon>Brucellaceae</taxon>
        <taxon>Brucella/Ochrobactrum group</taxon>
        <taxon>Brucella</taxon>
    </lineage>
</organism>
<protein>
    <recommendedName>
        <fullName evidence="1">Peptide methionine sulfoxide reductase MsrA</fullName>
        <shortName evidence="1">Protein-methionine-S-oxide reductase</shortName>
        <ecNumber evidence="1">1.8.4.11</ecNumber>
    </recommendedName>
    <alternativeName>
        <fullName evidence="1">Peptide-methionine (S)-S-oxide reductase</fullName>
        <shortName evidence="1">Peptide Met(O) reductase</shortName>
    </alternativeName>
</protein>
<name>MSRA_BRUME</name>
<keyword id="KW-0560">Oxidoreductase</keyword>
<feature type="chain" id="PRO_0000138532" description="Peptide methionine sulfoxide reductase MsrA">
    <location>
        <begin position="1"/>
        <end position="218"/>
    </location>
</feature>
<feature type="active site" evidence="1">
    <location>
        <position position="57"/>
    </location>
</feature>
<accession>Q8YDE7</accession>
<proteinExistence type="inferred from homology"/>
<dbReference type="EC" id="1.8.4.11" evidence="1"/>
<dbReference type="EMBL" id="AE008918">
    <property type="protein sequence ID" value="AAL53471.1"/>
    <property type="molecule type" value="Genomic_DNA"/>
</dbReference>
<dbReference type="PIR" id="AD3538">
    <property type="entry name" value="AD3538"/>
</dbReference>
<dbReference type="RefSeq" id="WP_004682501.1">
    <property type="nucleotide sequence ID" value="NZ_GG703779.1"/>
</dbReference>
<dbReference type="SMR" id="Q8YDE7"/>
<dbReference type="GeneID" id="29595005"/>
<dbReference type="KEGG" id="bme:BMEII0230"/>
<dbReference type="KEGG" id="bmel:DK63_3012"/>
<dbReference type="PATRIC" id="fig|224914.52.peg.3158"/>
<dbReference type="eggNOG" id="COG0225">
    <property type="taxonomic scope" value="Bacteria"/>
</dbReference>
<dbReference type="PhylomeDB" id="Q8YDE7"/>
<dbReference type="Proteomes" id="UP000000419">
    <property type="component" value="Chromosome II"/>
</dbReference>
<dbReference type="GO" id="GO:0005737">
    <property type="term" value="C:cytoplasm"/>
    <property type="evidence" value="ECO:0007669"/>
    <property type="project" value="TreeGrafter"/>
</dbReference>
<dbReference type="GO" id="GO:0036456">
    <property type="term" value="F:L-methionine-(S)-S-oxide reductase activity"/>
    <property type="evidence" value="ECO:0007669"/>
    <property type="project" value="TreeGrafter"/>
</dbReference>
<dbReference type="GO" id="GO:0008113">
    <property type="term" value="F:peptide-methionine (S)-S-oxide reductase activity"/>
    <property type="evidence" value="ECO:0007669"/>
    <property type="project" value="UniProtKB-UniRule"/>
</dbReference>
<dbReference type="GO" id="GO:0034599">
    <property type="term" value="P:cellular response to oxidative stress"/>
    <property type="evidence" value="ECO:0007669"/>
    <property type="project" value="TreeGrafter"/>
</dbReference>
<dbReference type="GO" id="GO:0036211">
    <property type="term" value="P:protein modification process"/>
    <property type="evidence" value="ECO:0007669"/>
    <property type="project" value="UniProtKB-UniRule"/>
</dbReference>
<dbReference type="FunFam" id="3.30.1060.10:FF:000001">
    <property type="entry name" value="Peptide methionine sulfoxide reductase MsrA"/>
    <property type="match status" value="1"/>
</dbReference>
<dbReference type="Gene3D" id="3.30.1060.10">
    <property type="entry name" value="Peptide methionine sulphoxide reductase MsrA"/>
    <property type="match status" value="1"/>
</dbReference>
<dbReference type="HAMAP" id="MF_01401">
    <property type="entry name" value="MsrA"/>
    <property type="match status" value="1"/>
</dbReference>
<dbReference type="InterPro" id="IPR002569">
    <property type="entry name" value="Met_Sox_Rdtase_MsrA_dom"/>
</dbReference>
<dbReference type="InterPro" id="IPR036509">
    <property type="entry name" value="Met_Sox_Rdtase_MsrA_sf"/>
</dbReference>
<dbReference type="InterPro" id="IPR050162">
    <property type="entry name" value="MsrA_MetSO_reductase"/>
</dbReference>
<dbReference type="NCBIfam" id="TIGR00401">
    <property type="entry name" value="msrA"/>
    <property type="match status" value="1"/>
</dbReference>
<dbReference type="PANTHER" id="PTHR42799">
    <property type="entry name" value="MITOCHONDRIAL PEPTIDE METHIONINE SULFOXIDE REDUCTASE"/>
    <property type="match status" value="1"/>
</dbReference>
<dbReference type="PANTHER" id="PTHR42799:SF2">
    <property type="entry name" value="MITOCHONDRIAL PEPTIDE METHIONINE SULFOXIDE REDUCTASE"/>
    <property type="match status" value="1"/>
</dbReference>
<dbReference type="Pfam" id="PF01625">
    <property type="entry name" value="PMSR"/>
    <property type="match status" value="1"/>
</dbReference>
<dbReference type="SUPFAM" id="SSF55068">
    <property type="entry name" value="Peptide methionine sulfoxide reductase"/>
    <property type="match status" value="1"/>
</dbReference>
<sequence length="218" mass="24047">MSFFDSYRKKMQMPSKEEVLPGRVQPIPTAAAHFVSGHPLKGPWPDGMKQVLFGMGCFWGAERLFWQVPGVYVTAVGYAGGITPNPTYEETCTGLTGHAEVVLVVYDPKVVTLNELLALFWEEHDPTQGMRQGNDIGTTYRSVIYTFNAVDRAVAEKSRDAYSQALASRGLGPVTTQITDAPDFYYAEDYHQQYLAKNPDGYCGLRGTGVSCPIPLAH</sequence>
<gene>
    <name evidence="1" type="primary">msrA</name>
    <name type="ordered locus">BMEII0230</name>
</gene>
<comment type="function">
    <text evidence="1">Has an important function as a repair enzyme for proteins that have been inactivated by oxidation. Catalyzes the reversible oxidation-reduction of methionine sulfoxide in proteins to methionine.</text>
</comment>
<comment type="catalytic activity">
    <reaction evidence="1">
        <text>L-methionyl-[protein] + [thioredoxin]-disulfide + H2O = L-methionyl-(S)-S-oxide-[protein] + [thioredoxin]-dithiol</text>
        <dbReference type="Rhea" id="RHEA:14217"/>
        <dbReference type="Rhea" id="RHEA-COMP:10698"/>
        <dbReference type="Rhea" id="RHEA-COMP:10700"/>
        <dbReference type="Rhea" id="RHEA-COMP:12313"/>
        <dbReference type="Rhea" id="RHEA-COMP:12315"/>
        <dbReference type="ChEBI" id="CHEBI:15377"/>
        <dbReference type="ChEBI" id="CHEBI:16044"/>
        <dbReference type="ChEBI" id="CHEBI:29950"/>
        <dbReference type="ChEBI" id="CHEBI:44120"/>
        <dbReference type="ChEBI" id="CHEBI:50058"/>
        <dbReference type="EC" id="1.8.4.11"/>
    </reaction>
</comment>
<comment type="catalytic activity">
    <reaction evidence="1">
        <text>[thioredoxin]-disulfide + L-methionine + H2O = L-methionine (S)-S-oxide + [thioredoxin]-dithiol</text>
        <dbReference type="Rhea" id="RHEA:19993"/>
        <dbReference type="Rhea" id="RHEA-COMP:10698"/>
        <dbReference type="Rhea" id="RHEA-COMP:10700"/>
        <dbReference type="ChEBI" id="CHEBI:15377"/>
        <dbReference type="ChEBI" id="CHEBI:29950"/>
        <dbReference type="ChEBI" id="CHEBI:50058"/>
        <dbReference type="ChEBI" id="CHEBI:57844"/>
        <dbReference type="ChEBI" id="CHEBI:58772"/>
        <dbReference type="EC" id="1.8.4.11"/>
    </reaction>
</comment>
<comment type="similarity">
    <text evidence="1">Belongs to the MsrA Met sulfoxide reductase family.</text>
</comment>
<evidence type="ECO:0000255" key="1">
    <source>
        <dbReference type="HAMAP-Rule" id="MF_01401"/>
    </source>
</evidence>
<reference key="1">
    <citation type="journal article" date="2002" name="Proc. Natl. Acad. Sci. U.S.A.">
        <title>The genome sequence of the facultative intracellular pathogen Brucella melitensis.</title>
        <authorList>
            <person name="DelVecchio V.G."/>
            <person name="Kapatral V."/>
            <person name="Redkar R.J."/>
            <person name="Patra G."/>
            <person name="Mujer C."/>
            <person name="Los T."/>
            <person name="Ivanova N."/>
            <person name="Anderson I."/>
            <person name="Bhattacharyya A."/>
            <person name="Lykidis A."/>
            <person name="Reznik G."/>
            <person name="Jablonski L."/>
            <person name="Larsen N."/>
            <person name="D'Souza M."/>
            <person name="Bernal A."/>
            <person name="Mazur M."/>
            <person name="Goltsman E."/>
            <person name="Selkov E."/>
            <person name="Elzer P.H."/>
            <person name="Hagius S."/>
            <person name="O'Callaghan D."/>
            <person name="Letesson J.-J."/>
            <person name="Haselkorn R."/>
            <person name="Kyrpides N.C."/>
            <person name="Overbeek R."/>
        </authorList>
    </citation>
    <scope>NUCLEOTIDE SEQUENCE [LARGE SCALE GENOMIC DNA]</scope>
    <source>
        <strain>ATCC 23456 / CCUG 17765 / NCTC 10094 / 16M</strain>
    </source>
</reference>